<keyword id="KW-0408">Iron</keyword>
<keyword id="KW-0411">Iron-sulfur</keyword>
<keyword id="KW-0479">Metal-binding</keyword>
<keyword id="KW-0496">Mitochondrion</keyword>
<keyword id="KW-1185">Reference proteome</keyword>
<keyword id="KW-0809">Transit peptide</keyword>
<gene>
    <name type="primary">isca1</name>
    <name type="ORF">DDB_G0280173</name>
</gene>
<organism>
    <name type="scientific">Dictyostelium discoideum</name>
    <name type="common">Social amoeba</name>
    <dbReference type="NCBI Taxonomy" id="44689"/>
    <lineage>
        <taxon>Eukaryota</taxon>
        <taxon>Amoebozoa</taxon>
        <taxon>Evosea</taxon>
        <taxon>Eumycetozoa</taxon>
        <taxon>Dictyostelia</taxon>
        <taxon>Dictyosteliales</taxon>
        <taxon>Dictyosteliaceae</taxon>
        <taxon>Dictyostelium</taxon>
    </lineage>
</organism>
<proteinExistence type="inferred from homology"/>
<comment type="function">
    <text evidence="2">Involved in the assembly of mitochondrial iron-sulfur proteins. Probably involved in the binding of an intermediate of Fe/S cluster assembly (By similarity).</text>
</comment>
<comment type="subcellular location">
    <subcellularLocation>
        <location evidence="2">Mitochondrion</location>
    </subcellularLocation>
</comment>
<comment type="similarity">
    <text evidence="4">Belongs to the HesB/IscA family.</text>
</comment>
<name>ISCA1_DICDI</name>
<feature type="transit peptide" description="Mitochondrion" evidence="3">
    <location>
        <begin position="1"/>
        <end status="unknown"/>
    </location>
</feature>
<feature type="chain" id="PRO_0000331541" description="Iron-sulfur cluster assembly 1 homolog, mitochondrial">
    <location>
        <begin status="unknown"/>
        <end position="139"/>
    </location>
</feature>
<feature type="binding site" evidence="1">
    <location>
        <position position="52"/>
    </location>
    <ligand>
        <name>Fe cation</name>
        <dbReference type="ChEBI" id="CHEBI:24875"/>
    </ligand>
</feature>
<feature type="binding site" evidence="1">
    <location>
        <position position="117"/>
    </location>
    <ligand>
        <name>Fe cation</name>
        <dbReference type="ChEBI" id="CHEBI:24875"/>
    </ligand>
</feature>
<feature type="binding site" evidence="1">
    <location>
        <position position="119"/>
    </location>
    <ligand>
        <name>Fe cation</name>
        <dbReference type="ChEBI" id="CHEBI:24875"/>
    </ligand>
</feature>
<evidence type="ECO:0000250" key="1">
    <source>
        <dbReference type="UniProtKB" id="P0AAC8"/>
    </source>
</evidence>
<evidence type="ECO:0000250" key="2">
    <source>
        <dbReference type="UniProtKB" id="Q9BUE6"/>
    </source>
</evidence>
<evidence type="ECO:0000255" key="3"/>
<evidence type="ECO:0000305" key="4"/>
<sequence>MSISGVVKLGKPSKKAIFSMTDSALKRVKEIMNDKKIDNCIGLRLGIKERGCSGMSYTLDFATQKNKFDETVVADKDINIIVDSKALLSVIGTEMDYIEEPIKKEFIFINPNATNTCGCGESFTTKDFSIPDLKLPKKN</sequence>
<protein>
    <recommendedName>
        <fullName>Iron-sulfur cluster assembly 1 homolog, mitochondrial</fullName>
    </recommendedName>
    <alternativeName>
        <fullName>Iron-sulfur assembly protein isca1</fullName>
    </alternativeName>
</protein>
<dbReference type="EMBL" id="AAFI02000035">
    <property type="protein sequence ID" value="EAL67313.1"/>
    <property type="molecule type" value="Genomic_DNA"/>
</dbReference>
<dbReference type="RefSeq" id="XP_641284.1">
    <property type="nucleotide sequence ID" value="XM_636192.1"/>
</dbReference>
<dbReference type="SMR" id="Q54VS1"/>
<dbReference type="FunCoup" id="Q54VS1">
    <property type="interactions" value="268"/>
</dbReference>
<dbReference type="STRING" id="44689.Q54VS1"/>
<dbReference type="PaxDb" id="44689-DDB0302403"/>
<dbReference type="EnsemblProtists" id="EAL67313">
    <property type="protein sequence ID" value="EAL67313"/>
    <property type="gene ID" value="DDB_G0280173"/>
</dbReference>
<dbReference type="GeneID" id="8622416"/>
<dbReference type="KEGG" id="ddi:DDB_G0280173"/>
<dbReference type="dictyBase" id="DDB_G0280173">
    <property type="gene designation" value="isca1"/>
</dbReference>
<dbReference type="VEuPathDB" id="AmoebaDB:DDB_G0280173"/>
<dbReference type="eggNOG" id="KOG1120">
    <property type="taxonomic scope" value="Eukaryota"/>
</dbReference>
<dbReference type="HOGENOM" id="CLU_069054_4_0_1"/>
<dbReference type="InParanoid" id="Q54VS1"/>
<dbReference type="OMA" id="LYIYGMQ"/>
<dbReference type="PhylomeDB" id="Q54VS1"/>
<dbReference type="Reactome" id="R-DDI-1362409">
    <property type="pathway name" value="Mitochondrial iron-sulfur cluster biogenesis"/>
</dbReference>
<dbReference type="PRO" id="PR:Q54VS1"/>
<dbReference type="Proteomes" id="UP000002195">
    <property type="component" value="Chromosome 3"/>
</dbReference>
<dbReference type="GO" id="GO:0005737">
    <property type="term" value="C:cytoplasm"/>
    <property type="evidence" value="ECO:0000318"/>
    <property type="project" value="GO_Central"/>
</dbReference>
<dbReference type="GO" id="GO:0005739">
    <property type="term" value="C:mitochondrion"/>
    <property type="evidence" value="ECO:0000250"/>
    <property type="project" value="dictyBase"/>
</dbReference>
<dbReference type="GO" id="GO:0051537">
    <property type="term" value="F:2 iron, 2 sulfur cluster binding"/>
    <property type="evidence" value="ECO:0000318"/>
    <property type="project" value="GO_Central"/>
</dbReference>
<dbReference type="GO" id="GO:0046872">
    <property type="term" value="F:metal ion binding"/>
    <property type="evidence" value="ECO:0007669"/>
    <property type="project" value="UniProtKB-KW"/>
</dbReference>
<dbReference type="GO" id="GO:0016226">
    <property type="term" value="P:iron-sulfur cluster assembly"/>
    <property type="evidence" value="ECO:0000318"/>
    <property type="project" value="GO_Central"/>
</dbReference>
<dbReference type="FunFam" id="2.60.300.12:FF:000001">
    <property type="entry name" value="Iron-binding protein IscA"/>
    <property type="match status" value="1"/>
</dbReference>
<dbReference type="Gene3D" id="2.60.300.12">
    <property type="entry name" value="HesB-like domain"/>
    <property type="match status" value="1"/>
</dbReference>
<dbReference type="InterPro" id="IPR050322">
    <property type="entry name" value="Fe-S_cluster_asmbl/transfer"/>
</dbReference>
<dbReference type="InterPro" id="IPR000361">
    <property type="entry name" value="FeS_biogenesis"/>
</dbReference>
<dbReference type="InterPro" id="IPR016092">
    <property type="entry name" value="FeS_cluster_insertion"/>
</dbReference>
<dbReference type="InterPro" id="IPR017870">
    <property type="entry name" value="FeS_cluster_insertion_CS"/>
</dbReference>
<dbReference type="InterPro" id="IPR035903">
    <property type="entry name" value="HesB-like_dom_sf"/>
</dbReference>
<dbReference type="NCBIfam" id="TIGR00049">
    <property type="entry name" value="iron-sulfur cluster assembly accessory protein"/>
    <property type="match status" value="1"/>
</dbReference>
<dbReference type="PANTHER" id="PTHR10072:SF41">
    <property type="entry name" value="IRON-SULFUR CLUSTER ASSEMBLY 1 HOMOLOG, MITOCHONDRIAL"/>
    <property type="match status" value="1"/>
</dbReference>
<dbReference type="PANTHER" id="PTHR10072">
    <property type="entry name" value="IRON-SULFUR CLUSTER ASSEMBLY PROTEIN"/>
    <property type="match status" value="1"/>
</dbReference>
<dbReference type="Pfam" id="PF01521">
    <property type="entry name" value="Fe-S_biosyn"/>
    <property type="match status" value="1"/>
</dbReference>
<dbReference type="SUPFAM" id="SSF89360">
    <property type="entry name" value="HesB-like domain"/>
    <property type="match status" value="1"/>
</dbReference>
<dbReference type="PROSITE" id="PS01152">
    <property type="entry name" value="HESB"/>
    <property type="match status" value="1"/>
</dbReference>
<reference key="1">
    <citation type="journal article" date="2005" name="Nature">
        <title>The genome of the social amoeba Dictyostelium discoideum.</title>
        <authorList>
            <person name="Eichinger L."/>
            <person name="Pachebat J.A."/>
            <person name="Gloeckner G."/>
            <person name="Rajandream M.A."/>
            <person name="Sucgang R."/>
            <person name="Berriman M."/>
            <person name="Song J."/>
            <person name="Olsen R."/>
            <person name="Szafranski K."/>
            <person name="Xu Q."/>
            <person name="Tunggal B."/>
            <person name="Kummerfeld S."/>
            <person name="Madera M."/>
            <person name="Konfortov B.A."/>
            <person name="Rivero F."/>
            <person name="Bankier A.T."/>
            <person name="Lehmann R."/>
            <person name="Hamlin N."/>
            <person name="Davies R."/>
            <person name="Gaudet P."/>
            <person name="Fey P."/>
            <person name="Pilcher K."/>
            <person name="Chen G."/>
            <person name="Saunders D."/>
            <person name="Sodergren E.J."/>
            <person name="Davis P."/>
            <person name="Kerhornou A."/>
            <person name="Nie X."/>
            <person name="Hall N."/>
            <person name="Anjard C."/>
            <person name="Hemphill L."/>
            <person name="Bason N."/>
            <person name="Farbrother P."/>
            <person name="Desany B."/>
            <person name="Just E."/>
            <person name="Morio T."/>
            <person name="Rost R."/>
            <person name="Churcher C.M."/>
            <person name="Cooper J."/>
            <person name="Haydock S."/>
            <person name="van Driessche N."/>
            <person name="Cronin A."/>
            <person name="Goodhead I."/>
            <person name="Muzny D.M."/>
            <person name="Mourier T."/>
            <person name="Pain A."/>
            <person name="Lu M."/>
            <person name="Harper D."/>
            <person name="Lindsay R."/>
            <person name="Hauser H."/>
            <person name="James K.D."/>
            <person name="Quiles M."/>
            <person name="Madan Babu M."/>
            <person name="Saito T."/>
            <person name="Buchrieser C."/>
            <person name="Wardroper A."/>
            <person name="Felder M."/>
            <person name="Thangavelu M."/>
            <person name="Johnson D."/>
            <person name="Knights A."/>
            <person name="Loulseged H."/>
            <person name="Mungall K.L."/>
            <person name="Oliver K."/>
            <person name="Price C."/>
            <person name="Quail M.A."/>
            <person name="Urushihara H."/>
            <person name="Hernandez J."/>
            <person name="Rabbinowitsch E."/>
            <person name="Steffen D."/>
            <person name="Sanders M."/>
            <person name="Ma J."/>
            <person name="Kohara Y."/>
            <person name="Sharp S."/>
            <person name="Simmonds M.N."/>
            <person name="Spiegler S."/>
            <person name="Tivey A."/>
            <person name="Sugano S."/>
            <person name="White B."/>
            <person name="Walker D."/>
            <person name="Woodward J.R."/>
            <person name="Winckler T."/>
            <person name="Tanaka Y."/>
            <person name="Shaulsky G."/>
            <person name="Schleicher M."/>
            <person name="Weinstock G.M."/>
            <person name="Rosenthal A."/>
            <person name="Cox E.C."/>
            <person name="Chisholm R.L."/>
            <person name="Gibbs R.A."/>
            <person name="Loomis W.F."/>
            <person name="Platzer M."/>
            <person name="Kay R.R."/>
            <person name="Williams J.G."/>
            <person name="Dear P.H."/>
            <person name="Noegel A.A."/>
            <person name="Barrell B.G."/>
            <person name="Kuspa A."/>
        </authorList>
    </citation>
    <scope>NUCLEOTIDE SEQUENCE [LARGE SCALE GENOMIC DNA]</scope>
    <source>
        <strain>AX4</strain>
    </source>
</reference>
<accession>Q54VS1</accession>